<organism>
    <name type="scientific">Bacillus cereus (strain 03BB102)</name>
    <dbReference type="NCBI Taxonomy" id="572264"/>
    <lineage>
        <taxon>Bacteria</taxon>
        <taxon>Bacillati</taxon>
        <taxon>Bacillota</taxon>
        <taxon>Bacilli</taxon>
        <taxon>Bacillales</taxon>
        <taxon>Bacillaceae</taxon>
        <taxon>Bacillus</taxon>
        <taxon>Bacillus cereus group</taxon>
    </lineage>
</organism>
<protein>
    <recommendedName>
        <fullName evidence="1">Pyridoxal 5'-phosphate synthase subunit PdxS</fullName>
        <shortName evidence="1">PLP synthase subunit PdxS</shortName>
        <ecNumber evidence="1">4.3.3.6</ecNumber>
    </recommendedName>
    <alternativeName>
        <fullName evidence="1">Pdx1</fullName>
    </alternativeName>
</protein>
<proteinExistence type="inferred from homology"/>
<evidence type="ECO:0000255" key="1">
    <source>
        <dbReference type="HAMAP-Rule" id="MF_01824"/>
    </source>
</evidence>
<reference key="1">
    <citation type="submission" date="2009-02" db="EMBL/GenBank/DDBJ databases">
        <title>Genome sequence of Bacillus cereus 03BB102.</title>
        <authorList>
            <person name="Dodson R.J."/>
            <person name="Jackson P."/>
            <person name="Munk A.C."/>
            <person name="Brettin T."/>
            <person name="Bruce D."/>
            <person name="Detter C."/>
            <person name="Tapia R."/>
            <person name="Han C."/>
            <person name="Sutton G."/>
            <person name="Sims D."/>
        </authorList>
    </citation>
    <scope>NUCLEOTIDE SEQUENCE [LARGE SCALE GENOMIC DNA]</scope>
    <source>
        <strain>03BB102</strain>
    </source>
</reference>
<dbReference type="EC" id="4.3.3.6" evidence="1"/>
<dbReference type="EMBL" id="CP001407">
    <property type="protein sequence ID" value="ACO28953.1"/>
    <property type="molecule type" value="Genomic_DNA"/>
</dbReference>
<dbReference type="RefSeq" id="WP_000186156.1">
    <property type="nucleotide sequence ID" value="NZ_CP009318.1"/>
</dbReference>
<dbReference type="SMR" id="C1ES17"/>
<dbReference type="GeneID" id="93011062"/>
<dbReference type="KEGG" id="bcx:BCA_0016"/>
<dbReference type="PATRIC" id="fig|572264.18.peg.76"/>
<dbReference type="UniPathway" id="UPA00245"/>
<dbReference type="Proteomes" id="UP000002210">
    <property type="component" value="Chromosome"/>
</dbReference>
<dbReference type="GO" id="GO:0036381">
    <property type="term" value="F:pyridoxal 5'-phosphate synthase (glutamine hydrolysing) activity"/>
    <property type="evidence" value="ECO:0007669"/>
    <property type="project" value="UniProtKB-UniRule"/>
</dbReference>
<dbReference type="GO" id="GO:0006520">
    <property type="term" value="P:amino acid metabolic process"/>
    <property type="evidence" value="ECO:0007669"/>
    <property type="project" value="TreeGrafter"/>
</dbReference>
<dbReference type="GO" id="GO:0042823">
    <property type="term" value="P:pyridoxal phosphate biosynthetic process"/>
    <property type="evidence" value="ECO:0007669"/>
    <property type="project" value="UniProtKB-UniRule"/>
</dbReference>
<dbReference type="GO" id="GO:0008615">
    <property type="term" value="P:pyridoxine biosynthetic process"/>
    <property type="evidence" value="ECO:0007669"/>
    <property type="project" value="TreeGrafter"/>
</dbReference>
<dbReference type="CDD" id="cd04727">
    <property type="entry name" value="pdxS"/>
    <property type="match status" value="1"/>
</dbReference>
<dbReference type="FunFam" id="3.20.20.70:FF:000001">
    <property type="entry name" value="Pyridoxine biosynthesis protein PDX1"/>
    <property type="match status" value="1"/>
</dbReference>
<dbReference type="Gene3D" id="3.20.20.70">
    <property type="entry name" value="Aldolase class I"/>
    <property type="match status" value="1"/>
</dbReference>
<dbReference type="HAMAP" id="MF_01824">
    <property type="entry name" value="PdxS"/>
    <property type="match status" value="1"/>
</dbReference>
<dbReference type="InterPro" id="IPR013785">
    <property type="entry name" value="Aldolase_TIM"/>
</dbReference>
<dbReference type="InterPro" id="IPR001852">
    <property type="entry name" value="PdxS/SNZ"/>
</dbReference>
<dbReference type="InterPro" id="IPR033755">
    <property type="entry name" value="PdxS/SNZ_N"/>
</dbReference>
<dbReference type="InterPro" id="IPR011060">
    <property type="entry name" value="RibuloseP-bd_barrel"/>
</dbReference>
<dbReference type="NCBIfam" id="NF003215">
    <property type="entry name" value="PRK04180.1"/>
    <property type="match status" value="1"/>
</dbReference>
<dbReference type="NCBIfam" id="TIGR00343">
    <property type="entry name" value="pyridoxal 5'-phosphate synthase lyase subunit PdxS"/>
    <property type="match status" value="1"/>
</dbReference>
<dbReference type="PANTHER" id="PTHR31829">
    <property type="entry name" value="PYRIDOXAL 5'-PHOSPHATE SYNTHASE SUBUNIT SNZ1-RELATED"/>
    <property type="match status" value="1"/>
</dbReference>
<dbReference type="PANTHER" id="PTHR31829:SF0">
    <property type="entry name" value="PYRIDOXAL 5'-PHOSPHATE SYNTHASE SUBUNIT SNZ1-RELATED"/>
    <property type="match status" value="1"/>
</dbReference>
<dbReference type="Pfam" id="PF01680">
    <property type="entry name" value="SOR_SNZ"/>
    <property type="match status" value="1"/>
</dbReference>
<dbReference type="PIRSF" id="PIRSF029271">
    <property type="entry name" value="Pdx1"/>
    <property type="match status" value="1"/>
</dbReference>
<dbReference type="SUPFAM" id="SSF51366">
    <property type="entry name" value="Ribulose-phoshate binding barrel"/>
    <property type="match status" value="1"/>
</dbReference>
<dbReference type="PROSITE" id="PS01235">
    <property type="entry name" value="PDXS_SNZ_1"/>
    <property type="match status" value="1"/>
</dbReference>
<dbReference type="PROSITE" id="PS51129">
    <property type="entry name" value="PDXS_SNZ_2"/>
    <property type="match status" value="1"/>
</dbReference>
<feature type="chain" id="PRO_1000188208" description="Pyridoxal 5'-phosphate synthase subunit PdxS">
    <location>
        <begin position="1"/>
        <end position="295"/>
    </location>
</feature>
<feature type="active site" description="Schiff-base intermediate with D-ribose 5-phosphate" evidence="1">
    <location>
        <position position="82"/>
    </location>
</feature>
<feature type="binding site" evidence="1">
    <location>
        <position position="25"/>
    </location>
    <ligand>
        <name>D-ribose 5-phosphate</name>
        <dbReference type="ChEBI" id="CHEBI:78346"/>
    </ligand>
</feature>
<feature type="binding site" evidence="1">
    <location>
        <position position="154"/>
    </location>
    <ligand>
        <name>D-ribose 5-phosphate</name>
        <dbReference type="ChEBI" id="CHEBI:78346"/>
    </ligand>
</feature>
<feature type="binding site" evidence="1">
    <location>
        <position position="166"/>
    </location>
    <ligand>
        <name>D-glyceraldehyde 3-phosphate</name>
        <dbReference type="ChEBI" id="CHEBI:59776"/>
    </ligand>
</feature>
<feature type="binding site" evidence="1">
    <location>
        <position position="215"/>
    </location>
    <ligand>
        <name>D-ribose 5-phosphate</name>
        <dbReference type="ChEBI" id="CHEBI:78346"/>
    </ligand>
</feature>
<feature type="binding site" evidence="1">
    <location>
        <begin position="236"/>
        <end position="237"/>
    </location>
    <ligand>
        <name>D-ribose 5-phosphate</name>
        <dbReference type="ChEBI" id="CHEBI:78346"/>
    </ligand>
</feature>
<accession>C1ES17</accession>
<comment type="function">
    <text evidence="1">Catalyzes the formation of pyridoxal 5'-phosphate from ribose 5-phosphate (RBP), glyceraldehyde 3-phosphate (G3P) and ammonia. The ammonia is provided by the PdxT subunit. Can also use ribulose 5-phosphate and dihydroxyacetone phosphate as substrates, resulting from enzyme-catalyzed isomerization of RBP and G3P, respectively.</text>
</comment>
<comment type="catalytic activity">
    <reaction evidence="1">
        <text>aldehydo-D-ribose 5-phosphate + D-glyceraldehyde 3-phosphate + L-glutamine = pyridoxal 5'-phosphate + L-glutamate + phosphate + 3 H2O + H(+)</text>
        <dbReference type="Rhea" id="RHEA:31507"/>
        <dbReference type="ChEBI" id="CHEBI:15377"/>
        <dbReference type="ChEBI" id="CHEBI:15378"/>
        <dbReference type="ChEBI" id="CHEBI:29985"/>
        <dbReference type="ChEBI" id="CHEBI:43474"/>
        <dbReference type="ChEBI" id="CHEBI:58273"/>
        <dbReference type="ChEBI" id="CHEBI:58359"/>
        <dbReference type="ChEBI" id="CHEBI:59776"/>
        <dbReference type="ChEBI" id="CHEBI:597326"/>
        <dbReference type="EC" id="4.3.3.6"/>
    </reaction>
</comment>
<comment type="pathway">
    <text evidence="1">Cofactor biosynthesis; pyridoxal 5'-phosphate biosynthesis.</text>
</comment>
<comment type="subunit">
    <text evidence="1">In the presence of PdxT, forms a dodecamer of heterodimers.</text>
</comment>
<comment type="similarity">
    <text evidence="1">Belongs to the PdxS/SNZ family.</text>
</comment>
<gene>
    <name evidence="1" type="primary">pdxS</name>
    <name type="ordered locus">BCA_0016</name>
</gene>
<name>PDXS_BACC3</name>
<sequence>MTNVTGTERVKRGMAEMQKGGVIMDVINAEQAKIAEEAGAVAVMALERVPADIRAAGGVSRMADPTIVEEVMGAVSIPVMAKCRIGHLVEARVLESLGVDYIDESEVLTPADEVYHLNKRDYTVPFVCGCRDIGEAARRIAEGASMLRTKGEPGTGNIVEAVRHMRQVNAEIRQVASLREDELMTYAKNTGAPYEVLLEIKRLGRLPVVNFAAGGVATPADAALMMQLGADGVFVGSGIFKSENPAKFARAIVEATTHYEDYELIASLSKGLGNAMKGIEISTLLPEQRMQERGW</sequence>
<keyword id="KW-0456">Lyase</keyword>
<keyword id="KW-0663">Pyridoxal phosphate</keyword>
<keyword id="KW-0704">Schiff base</keyword>